<name>RL6_CHLTA</name>
<protein>
    <recommendedName>
        <fullName evidence="1">Large ribosomal subunit protein uL6</fullName>
    </recommendedName>
    <alternativeName>
        <fullName evidence="2">50S ribosomal protein L6</fullName>
    </alternativeName>
</protein>
<gene>
    <name evidence="1" type="primary">rplF</name>
    <name type="ordered locus">CTA_0563</name>
</gene>
<accession>Q3KLI3</accession>
<sequence length="183" mass="19881">MSRKARDPIVLPQGVEVSIQNDEISVKGPKGSLTQVLAKEVEIAVKGNEVFVTPAAHVVDRPGRIQGLYWALIANMVKGVHTGFEKRLEMIGVGFRAAVQGSLLDLSIGVSHPTKMPIPTGLEVSVEKNTLISIKGINKQLVGEFATCVRAKRPPEPYKGKGIRYENEYVRRKAGKAAKTGKK</sequence>
<comment type="function">
    <text evidence="1">This protein binds to the 23S rRNA, and is important in its secondary structure. It is located near the subunit interface in the base of the L7/L12 stalk, and near the tRNA binding site of the peptidyltransferase center.</text>
</comment>
<comment type="subunit">
    <text evidence="1">Part of the 50S ribosomal subunit.</text>
</comment>
<comment type="similarity">
    <text evidence="1">Belongs to the universal ribosomal protein uL6 family.</text>
</comment>
<dbReference type="EMBL" id="CP000051">
    <property type="protein sequence ID" value="AAX50789.1"/>
    <property type="molecule type" value="Genomic_DNA"/>
</dbReference>
<dbReference type="RefSeq" id="WP_011324762.1">
    <property type="nucleotide sequence ID" value="NC_007429.1"/>
</dbReference>
<dbReference type="SMR" id="Q3KLI3"/>
<dbReference type="KEGG" id="cta:CTA_0563"/>
<dbReference type="HOGENOM" id="CLU_065464_1_2_0"/>
<dbReference type="Proteomes" id="UP000002532">
    <property type="component" value="Chromosome"/>
</dbReference>
<dbReference type="GO" id="GO:0022625">
    <property type="term" value="C:cytosolic large ribosomal subunit"/>
    <property type="evidence" value="ECO:0007669"/>
    <property type="project" value="TreeGrafter"/>
</dbReference>
<dbReference type="GO" id="GO:0019843">
    <property type="term" value="F:rRNA binding"/>
    <property type="evidence" value="ECO:0007669"/>
    <property type="project" value="UniProtKB-UniRule"/>
</dbReference>
<dbReference type="GO" id="GO:0003735">
    <property type="term" value="F:structural constituent of ribosome"/>
    <property type="evidence" value="ECO:0007669"/>
    <property type="project" value="InterPro"/>
</dbReference>
<dbReference type="GO" id="GO:0002181">
    <property type="term" value="P:cytoplasmic translation"/>
    <property type="evidence" value="ECO:0007669"/>
    <property type="project" value="TreeGrafter"/>
</dbReference>
<dbReference type="FunFam" id="3.90.930.12:FF:000001">
    <property type="entry name" value="50S ribosomal protein L6"/>
    <property type="match status" value="1"/>
</dbReference>
<dbReference type="Gene3D" id="3.90.930.12">
    <property type="entry name" value="Ribosomal protein L6, alpha-beta domain"/>
    <property type="match status" value="2"/>
</dbReference>
<dbReference type="HAMAP" id="MF_01365_B">
    <property type="entry name" value="Ribosomal_uL6_B"/>
    <property type="match status" value="1"/>
</dbReference>
<dbReference type="InterPro" id="IPR000702">
    <property type="entry name" value="Ribosomal_uL6-like"/>
</dbReference>
<dbReference type="InterPro" id="IPR036789">
    <property type="entry name" value="Ribosomal_uL6-like_a/b-dom_sf"/>
</dbReference>
<dbReference type="InterPro" id="IPR020040">
    <property type="entry name" value="Ribosomal_uL6_a/b-dom"/>
</dbReference>
<dbReference type="InterPro" id="IPR019906">
    <property type="entry name" value="Ribosomal_uL6_bac-type"/>
</dbReference>
<dbReference type="InterPro" id="IPR002358">
    <property type="entry name" value="Ribosomal_uL6_CS"/>
</dbReference>
<dbReference type="NCBIfam" id="TIGR03654">
    <property type="entry name" value="L6_bact"/>
    <property type="match status" value="1"/>
</dbReference>
<dbReference type="PANTHER" id="PTHR11655">
    <property type="entry name" value="60S/50S RIBOSOMAL PROTEIN L6/L9"/>
    <property type="match status" value="1"/>
</dbReference>
<dbReference type="PANTHER" id="PTHR11655:SF14">
    <property type="entry name" value="LARGE RIBOSOMAL SUBUNIT PROTEIN UL6M"/>
    <property type="match status" value="1"/>
</dbReference>
<dbReference type="Pfam" id="PF00347">
    <property type="entry name" value="Ribosomal_L6"/>
    <property type="match status" value="2"/>
</dbReference>
<dbReference type="PIRSF" id="PIRSF002162">
    <property type="entry name" value="Ribosomal_L6"/>
    <property type="match status" value="1"/>
</dbReference>
<dbReference type="PRINTS" id="PR00059">
    <property type="entry name" value="RIBOSOMALL6"/>
</dbReference>
<dbReference type="SUPFAM" id="SSF56053">
    <property type="entry name" value="Ribosomal protein L6"/>
    <property type="match status" value="2"/>
</dbReference>
<dbReference type="PROSITE" id="PS00525">
    <property type="entry name" value="RIBOSOMAL_L6_1"/>
    <property type="match status" value="1"/>
</dbReference>
<keyword id="KW-0687">Ribonucleoprotein</keyword>
<keyword id="KW-0689">Ribosomal protein</keyword>
<keyword id="KW-0694">RNA-binding</keyword>
<keyword id="KW-0699">rRNA-binding</keyword>
<organism>
    <name type="scientific">Chlamydia trachomatis serovar A (strain ATCC VR-571B / DSM 19440 / HAR-13)</name>
    <dbReference type="NCBI Taxonomy" id="315277"/>
    <lineage>
        <taxon>Bacteria</taxon>
        <taxon>Pseudomonadati</taxon>
        <taxon>Chlamydiota</taxon>
        <taxon>Chlamydiia</taxon>
        <taxon>Chlamydiales</taxon>
        <taxon>Chlamydiaceae</taxon>
        <taxon>Chlamydia/Chlamydophila group</taxon>
        <taxon>Chlamydia</taxon>
    </lineage>
</organism>
<proteinExistence type="inferred from homology"/>
<evidence type="ECO:0000255" key="1">
    <source>
        <dbReference type="HAMAP-Rule" id="MF_01365"/>
    </source>
</evidence>
<evidence type="ECO:0000305" key="2"/>
<feature type="chain" id="PRO_0000265239" description="Large ribosomal subunit protein uL6">
    <location>
        <begin position="1"/>
        <end position="183"/>
    </location>
</feature>
<reference key="1">
    <citation type="journal article" date="2005" name="Infect. Immun.">
        <title>Comparative genomic analysis of Chlamydia trachomatis oculotropic and genitotropic strains.</title>
        <authorList>
            <person name="Carlson J.H."/>
            <person name="Porcella S.F."/>
            <person name="McClarty G."/>
            <person name="Caldwell H.D."/>
        </authorList>
    </citation>
    <scope>NUCLEOTIDE SEQUENCE [LARGE SCALE GENOMIC DNA]</scope>
    <source>
        <strain>ATCC VR-571B / DSM 19440 / HAR-13</strain>
    </source>
</reference>